<protein>
    <recommendedName>
        <fullName>Short neurotoxin 1</fullName>
    </recommendedName>
    <alternativeName>
        <fullName>Neurotoxin PA A</fullName>
    </alternativeName>
</protein>
<dbReference type="EMBL" id="DQ917498">
    <property type="protein sequence ID" value="ABK63527.1"/>
    <property type="molecule type" value="mRNA"/>
</dbReference>
<dbReference type="SMR" id="P25497"/>
<dbReference type="GO" id="GO:0005576">
    <property type="term" value="C:extracellular region"/>
    <property type="evidence" value="ECO:0007669"/>
    <property type="project" value="UniProtKB-SubCell"/>
</dbReference>
<dbReference type="GO" id="GO:0030550">
    <property type="term" value="F:acetylcholine receptor inhibitor activity"/>
    <property type="evidence" value="ECO:0007669"/>
    <property type="project" value="UniProtKB-KW"/>
</dbReference>
<dbReference type="GO" id="GO:0099106">
    <property type="term" value="F:ion channel regulator activity"/>
    <property type="evidence" value="ECO:0007669"/>
    <property type="project" value="UniProtKB-KW"/>
</dbReference>
<dbReference type="GO" id="GO:0090729">
    <property type="term" value="F:toxin activity"/>
    <property type="evidence" value="ECO:0007669"/>
    <property type="project" value="UniProtKB-KW"/>
</dbReference>
<dbReference type="CDD" id="cd00206">
    <property type="entry name" value="TFP_snake_toxin"/>
    <property type="match status" value="1"/>
</dbReference>
<dbReference type="FunFam" id="2.10.60.10:FF:000024">
    <property type="entry name" value="Cytotoxin 1"/>
    <property type="match status" value="1"/>
</dbReference>
<dbReference type="Gene3D" id="2.10.60.10">
    <property type="entry name" value="CD59"/>
    <property type="match status" value="1"/>
</dbReference>
<dbReference type="InterPro" id="IPR003571">
    <property type="entry name" value="Snake_3FTx"/>
</dbReference>
<dbReference type="InterPro" id="IPR045860">
    <property type="entry name" value="Snake_toxin-like_sf"/>
</dbReference>
<dbReference type="InterPro" id="IPR018354">
    <property type="entry name" value="Snake_toxin_con_site"/>
</dbReference>
<dbReference type="InterPro" id="IPR054131">
    <property type="entry name" value="Toxin_cobra-type"/>
</dbReference>
<dbReference type="Pfam" id="PF21947">
    <property type="entry name" value="Toxin_cobra-type"/>
    <property type="match status" value="1"/>
</dbReference>
<dbReference type="SUPFAM" id="SSF57302">
    <property type="entry name" value="Snake toxin-like"/>
    <property type="match status" value="1"/>
</dbReference>
<dbReference type="PROSITE" id="PS00272">
    <property type="entry name" value="SNAKE_TOXIN"/>
    <property type="match status" value="1"/>
</dbReference>
<reference key="1">
    <citation type="journal article" date="2007" name="Cell. Mol. Life Sci.">
        <title>Distinct activities of novel neurotoxins from Australian venomous snakes for nicotinic acetylcholine receptors.</title>
        <authorList>
            <person name="St Pierre L."/>
            <person name="Fischer H."/>
            <person name="Adams D.J."/>
            <person name="Schenning M."/>
            <person name="Lavidis N."/>
            <person name="de Jersey J."/>
            <person name="Masci P.P."/>
            <person name="Lavin M.F."/>
        </authorList>
    </citation>
    <scope>NUCLEOTIDE SEQUENCE [MRNA]</scope>
    <source>
        <tissue>Venom gland</tissue>
    </source>
</reference>
<reference key="2">
    <citation type="journal article" date="1985" name="Biochem. J.">
        <title>Isolation and amino acid sequence of a short-chain neurotoxin from an Australian elapid snake, Pseudechis australis.</title>
        <authorList>
            <person name="Takasaki C."/>
            <person name="Tamiya N."/>
        </authorList>
    </citation>
    <scope>PROTEIN SEQUENCE OF 22-83</scope>
    <scope>FUNCTION</scope>
    <scope>TOXIC DOSE</scope>
    <scope>SUBCELLULAR LOCATION</scope>
    <source>
        <tissue>Venom</tissue>
    </source>
</reference>
<evidence type="ECO:0000250" key="1">
    <source>
        <dbReference type="UniProtKB" id="P0C1Z0"/>
    </source>
</evidence>
<evidence type="ECO:0000269" key="2">
    <source>
    </source>
</evidence>
<evidence type="ECO:0000305" key="3"/>
<sequence length="83" mass="9049">MKTLLLTLVVVTIVCLDLGYTMTCCNQQSSQPKTTTICAGGESSCYKKTWSDHRGSRTERGCGCPHVKPGIKLTCCKTDECNN</sequence>
<proteinExistence type="evidence at protein level"/>
<organism>
    <name type="scientific">Pseudechis australis</name>
    <name type="common">Mulga snake</name>
    <name type="synonym">King brown snake</name>
    <dbReference type="NCBI Taxonomy" id="8670"/>
    <lineage>
        <taxon>Eukaryota</taxon>
        <taxon>Metazoa</taxon>
        <taxon>Chordata</taxon>
        <taxon>Craniata</taxon>
        <taxon>Vertebrata</taxon>
        <taxon>Euteleostomi</taxon>
        <taxon>Lepidosauria</taxon>
        <taxon>Squamata</taxon>
        <taxon>Bifurcata</taxon>
        <taxon>Unidentata</taxon>
        <taxon>Episquamata</taxon>
        <taxon>Toxicofera</taxon>
        <taxon>Serpentes</taxon>
        <taxon>Colubroidea</taxon>
        <taxon>Elapidae</taxon>
        <taxon>Hydrophiinae</taxon>
        <taxon>Pseudechis</taxon>
    </lineage>
</organism>
<name>3S11_PSEAU</name>
<feature type="signal peptide" evidence="2">
    <location>
        <begin position="1"/>
        <end position="21"/>
    </location>
</feature>
<feature type="chain" id="PRO_5000279906" description="Short neurotoxin 1" evidence="2">
    <location>
        <begin position="22"/>
        <end position="83"/>
    </location>
</feature>
<feature type="disulfide bond" evidence="1">
    <location>
        <begin position="24"/>
        <end position="45"/>
    </location>
</feature>
<feature type="disulfide bond" evidence="1">
    <location>
        <begin position="38"/>
        <end position="62"/>
    </location>
</feature>
<feature type="disulfide bond" evidence="1">
    <location>
        <begin position="64"/>
        <end position="75"/>
    </location>
</feature>
<feature type="disulfide bond" evidence="1">
    <location>
        <begin position="76"/>
        <end position="81"/>
    </location>
</feature>
<comment type="function">
    <text evidence="2">Binds to muscle nicotinic acetylcholine receptor (nAChR) and inhibit acetylcholine from binding to the receptor, thereby impairing neuromuscular transmission.</text>
</comment>
<comment type="subcellular location">
    <subcellularLocation>
        <location evidence="2">Secreted</location>
    </subcellularLocation>
</comment>
<comment type="tissue specificity">
    <text evidence="3">Expressed by the venom gland.</text>
</comment>
<comment type="toxic dose">
    <text evidence="2">LD(50) is 0.076 mg/kg by intravenous injection into mice.</text>
</comment>
<comment type="similarity">
    <text evidence="3">Belongs to the three-finger toxin family. Short-chain subfamily. Type I alpha-neurotoxin sub-subfamily.</text>
</comment>
<accession>P25497</accession>
<accession>A8HDJ3</accession>
<keyword id="KW-0008">Acetylcholine receptor inhibiting toxin</keyword>
<keyword id="KW-0903">Direct protein sequencing</keyword>
<keyword id="KW-1015">Disulfide bond</keyword>
<keyword id="KW-0872">Ion channel impairing toxin</keyword>
<keyword id="KW-0528">Neurotoxin</keyword>
<keyword id="KW-0629">Postsynaptic neurotoxin</keyword>
<keyword id="KW-0964">Secreted</keyword>
<keyword id="KW-0732">Signal</keyword>
<keyword id="KW-0800">Toxin</keyword>